<keyword id="KW-0238">DNA-binding</keyword>
<keyword id="KW-0539">Nucleus</keyword>
<keyword id="KW-1185">Reference proteome</keyword>
<keyword id="KW-0677">Repeat</keyword>
<keyword id="KW-0804">Transcription</keyword>
<keyword id="KW-0805">Transcription regulation</keyword>
<accession>Q851V1</accession>
<feature type="chain" id="PRO_0000378046" description="Putative B3 domain-containing protein Os03g0621600">
    <location>
        <begin position="1"/>
        <end position="306"/>
    </location>
</feature>
<feature type="DNA-binding region" description="TF-B3 1" evidence="1">
    <location>
        <begin position="29"/>
        <end position="122"/>
    </location>
</feature>
<feature type="DNA-binding region" description="TF-B3 2" evidence="1">
    <location>
        <begin position="210"/>
        <end position="306"/>
    </location>
</feature>
<feature type="region of interest" description="Disordered" evidence="2">
    <location>
        <begin position="139"/>
        <end position="166"/>
    </location>
</feature>
<organism>
    <name type="scientific">Oryza sativa subsp. japonica</name>
    <name type="common">Rice</name>
    <dbReference type="NCBI Taxonomy" id="39947"/>
    <lineage>
        <taxon>Eukaryota</taxon>
        <taxon>Viridiplantae</taxon>
        <taxon>Streptophyta</taxon>
        <taxon>Embryophyta</taxon>
        <taxon>Tracheophyta</taxon>
        <taxon>Spermatophyta</taxon>
        <taxon>Magnoliopsida</taxon>
        <taxon>Liliopsida</taxon>
        <taxon>Poales</taxon>
        <taxon>Poaceae</taxon>
        <taxon>BOP clade</taxon>
        <taxon>Oryzoideae</taxon>
        <taxon>Oryzeae</taxon>
        <taxon>Oryzinae</taxon>
        <taxon>Oryza</taxon>
        <taxon>Oryza sativa</taxon>
    </lineage>
</organism>
<comment type="subcellular location">
    <subcellularLocation>
        <location evidence="1">Nucleus</location>
    </subcellularLocation>
</comment>
<name>Y3160_ORYSJ</name>
<sequence length="306" mass="34810">MVKILKTTLRATTMLKVLVKIRLSLFLTFSVLCLMPIMYMASHKTIPNEFLHNFGGKIPKSIKLETRSGLTFDVQVTKNSGRVVLQSGWASYVSAHDLKIGDFLVFKYSGDSQLKTLIFDSSGCEKVCEKPVDMSGRSYDIAMRNSQDEKKKRKQRDISRQGTVKPSEEGLKAELVPGCILPSRTDLTRLQKNILIEKVKAINSETPIYGYVMNNSSIHGIPCTVEISKKYADVYLPFEDGTVVLQHHGKSWNVRCCLTKQNSKRFLKGWRQFAGDNKLHLGDICLFDLLKDKKKYVMDVHIIRRK</sequence>
<dbReference type="EMBL" id="AC097280">
    <property type="protein sequence ID" value="AAO34499.1"/>
    <property type="molecule type" value="Genomic_DNA"/>
</dbReference>
<dbReference type="EMBL" id="DP000009">
    <property type="protein sequence ID" value="ABF97676.1"/>
    <property type="molecule type" value="Genomic_DNA"/>
</dbReference>
<dbReference type="EMBL" id="AP014959">
    <property type="status" value="NOT_ANNOTATED_CDS"/>
    <property type="molecule type" value="Genomic_DNA"/>
</dbReference>
<dbReference type="SMR" id="Q851V1"/>
<dbReference type="PaxDb" id="39947-Q851V1"/>
<dbReference type="eggNOG" id="ENOG502QT0X">
    <property type="taxonomic scope" value="Eukaryota"/>
</dbReference>
<dbReference type="InParanoid" id="Q851V1"/>
<dbReference type="Proteomes" id="UP000000763">
    <property type="component" value="Chromosome 3"/>
</dbReference>
<dbReference type="Proteomes" id="UP000059680">
    <property type="component" value="Chromosome 3"/>
</dbReference>
<dbReference type="GO" id="GO:0005634">
    <property type="term" value="C:nucleus"/>
    <property type="evidence" value="ECO:0007669"/>
    <property type="project" value="UniProtKB-SubCell"/>
</dbReference>
<dbReference type="GO" id="GO:0003677">
    <property type="term" value="F:DNA binding"/>
    <property type="evidence" value="ECO:0007669"/>
    <property type="project" value="UniProtKB-KW"/>
</dbReference>
<dbReference type="CDD" id="cd10017">
    <property type="entry name" value="B3_DNA"/>
    <property type="match status" value="2"/>
</dbReference>
<dbReference type="Gene3D" id="2.40.330.10">
    <property type="entry name" value="DNA-binding pseudobarrel domain"/>
    <property type="match status" value="2"/>
</dbReference>
<dbReference type="InterPro" id="IPR003340">
    <property type="entry name" value="B3_DNA-bd"/>
</dbReference>
<dbReference type="InterPro" id="IPR015300">
    <property type="entry name" value="DNA-bd_pseudobarrel_sf"/>
</dbReference>
<dbReference type="InterPro" id="IPR044837">
    <property type="entry name" value="REM16-like"/>
</dbReference>
<dbReference type="PANTHER" id="PTHR31391:SF121">
    <property type="entry name" value="B3 DOMAIN-CONTAINING PROTEIN OS08G0325100-RELATED"/>
    <property type="match status" value="1"/>
</dbReference>
<dbReference type="PANTHER" id="PTHR31391">
    <property type="entry name" value="B3 DOMAIN-CONTAINING PROTEIN OS11G0197600-RELATED"/>
    <property type="match status" value="1"/>
</dbReference>
<dbReference type="Pfam" id="PF02362">
    <property type="entry name" value="B3"/>
    <property type="match status" value="2"/>
</dbReference>
<dbReference type="SMART" id="SM01019">
    <property type="entry name" value="B3"/>
    <property type="match status" value="2"/>
</dbReference>
<dbReference type="SUPFAM" id="SSF101936">
    <property type="entry name" value="DNA-binding pseudobarrel domain"/>
    <property type="match status" value="2"/>
</dbReference>
<dbReference type="PROSITE" id="PS50863">
    <property type="entry name" value="B3"/>
    <property type="match status" value="2"/>
</dbReference>
<reference key="1">
    <citation type="journal article" date="2005" name="Genome Res.">
        <title>Sequence, annotation, and analysis of synteny between rice chromosome 3 and diverged grass species.</title>
        <authorList>
            <consortium name="The rice chromosome 3 sequencing consortium"/>
            <person name="Buell C.R."/>
            <person name="Yuan Q."/>
            <person name="Ouyang S."/>
            <person name="Liu J."/>
            <person name="Zhu W."/>
            <person name="Wang A."/>
            <person name="Maiti R."/>
            <person name="Haas B."/>
            <person name="Wortman J."/>
            <person name="Pertea M."/>
            <person name="Jones K.M."/>
            <person name="Kim M."/>
            <person name="Overton L."/>
            <person name="Tsitrin T."/>
            <person name="Fadrosh D."/>
            <person name="Bera J."/>
            <person name="Weaver B."/>
            <person name="Jin S."/>
            <person name="Johri S."/>
            <person name="Reardon M."/>
            <person name="Webb K."/>
            <person name="Hill J."/>
            <person name="Moffat K."/>
            <person name="Tallon L."/>
            <person name="Van Aken S."/>
            <person name="Lewis M."/>
            <person name="Utterback T."/>
            <person name="Feldblyum T."/>
            <person name="Zismann V."/>
            <person name="Iobst S."/>
            <person name="Hsiao J."/>
            <person name="de Vazeille A.R."/>
            <person name="Salzberg S.L."/>
            <person name="White O."/>
            <person name="Fraser C.M."/>
            <person name="Yu Y."/>
            <person name="Kim H."/>
            <person name="Rambo T."/>
            <person name="Currie J."/>
            <person name="Collura K."/>
            <person name="Kernodle-Thompson S."/>
            <person name="Wei F."/>
            <person name="Kudrna K."/>
            <person name="Ammiraju J.S.S."/>
            <person name="Luo M."/>
            <person name="Goicoechea J.L."/>
            <person name="Wing R.A."/>
            <person name="Henry D."/>
            <person name="Oates R."/>
            <person name="Palmer M."/>
            <person name="Pries G."/>
            <person name="Saski C."/>
            <person name="Simmons J."/>
            <person name="Soderlund C."/>
            <person name="Nelson W."/>
            <person name="de la Bastide M."/>
            <person name="Spiegel L."/>
            <person name="Nascimento L."/>
            <person name="Huang E."/>
            <person name="Preston R."/>
            <person name="Zutavern T."/>
            <person name="Palmer L."/>
            <person name="O'Shaughnessy A."/>
            <person name="Dike S."/>
            <person name="McCombie W.R."/>
            <person name="Minx P."/>
            <person name="Cordum H."/>
            <person name="Wilson R."/>
            <person name="Jin W."/>
            <person name="Lee H.R."/>
            <person name="Jiang J."/>
            <person name="Jackson S."/>
        </authorList>
    </citation>
    <scope>NUCLEOTIDE SEQUENCE [LARGE SCALE GENOMIC DNA]</scope>
    <source>
        <strain>cv. Nipponbare</strain>
    </source>
</reference>
<reference key="2">
    <citation type="journal article" date="2005" name="Nature">
        <title>The map-based sequence of the rice genome.</title>
        <authorList>
            <consortium name="International rice genome sequencing project (IRGSP)"/>
        </authorList>
    </citation>
    <scope>NUCLEOTIDE SEQUENCE [LARGE SCALE GENOMIC DNA]</scope>
    <source>
        <strain>cv. Nipponbare</strain>
    </source>
</reference>
<reference key="3">
    <citation type="journal article" date="2013" name="Rice">
        <title>Improvement of the Oryza sativa Nipponbare reference genome using next generation sequence and optical map data.</title>
        <authorList>
            <person name="Kawahara Y."/>
            <person name="de la Bastide M."/>
            <person name="Hamilton J.P."/>
            <person name="Kanamori H."/>
            <person name="McCombie W.R."/>
            <person name="Ouyang S."/>
            <person name="Schwartz D.C."/>
            <person name="Tanaka T."/>
            <person name="Wu J."/>
            <person name="Zhou S."/>
            <person name="Childs K.L."/>
            <person name="Davidson R.M."/>
            <person name="Lin H."/>
            <person name="Quesada-Ocampo L."/>
            <person name="Vaillancourt B."/>
            <person name="Sakai H."/>
            <person name="Lee S.S."/>
            <person name="Kim J."/>
            <person name="Numa H."/>
            <person name="Itoh T."/>
            <person name="Buell C.R."/>
            <person name="Matsumoto T."/>
        </authorList>
    </citation>
    <scope>GENOME REANNOTATION</scope>
    <source>
        <strain>cv. Nipponbare</strain>
    </source>
</reference>
<evidence type="ECO:0000255" key="1">
    <source>
        <dbReference type="PROSITE-ProRule" id="PRU00326"/>
    </source>
</evidence>
<evidence type="ECO:0000256" key="2">
    <source>
        <dbReference type="SAM" id="MobiDB-lite"/>
    </source>
</evidence>
<proteinExistence type="inferred from homology"/>
<protein>
    <recommendedName>
        <fullName>Putative B3 domain-containing protein Os03g0621600</fullName>
    </recommendedName>
</protein>
<gene>
    <name type="ordered locus">Os03g0621600</name>
    <name type="ordered locus">LOC_Os03g42410</name>
    <name type="ORF">OSJNBb0111B07.21</name>
</gene>